<name>LPOB_YERE8</name>
<dbReference type="EMBL" id="AM286415">
    <property type="protein sequence ID" value="CAL11778.1"/>
    <property type="status" value="ALT_INIT"/>
    <property type="molecule type" value="Genomic_DNA"/>
</dbReference>
<dbReference type="RefSeq" id="WP_042661400.1">
    <property type="nucleotide sequence ID" value="NC_008800.1"/>
</dbReference>
<dbReference type="RefSeq" id="YP_001005989.1">
    <property type="nucleotide sequence ID" value="NC_008800.1"/>
</dbReference>
<dbReference type="SMR" id="A1JME2"/>
<dbReference type="KEGG" id="yen:YE1703"/>
<dbReference type="PATRIC" id="fig|393305.7.peg.1846"/>
<dbReference type="eggNOG" id="COG3417">
    <property type="taxonomic scope" value="Bacteria"/>
</dbReference>
<dbReference type="HOGENOM" id="CLU_092328_0_0_6"/>
<dbReference type="OrthoDB" id="6466283at2"/>
<dbReference type="Proteomes" id="UP000000642">
    <property type="component" value="Chromosome"/>
</dbReference>
<dbReference type="GO" id="GO:0031241">
    <property type="term" value="C:periplasmic side of cell outer membrane"/>
    <property type="evidence" value="ECO:0007669"/>
    <property type="project" value="UniProtKB-UniRule"/>
</dbReference>
<dbReference type="GO" id="GO:0030234">
    <property type="term" value="F:enzyme regulator activity"/>
    <property type="evidence" value="ECO:0007669"/>
    <property type="project" value="UniProtKB-UniRule"/>
</dbReference>
<dbReference type="GO" id="GO:0009252">
    <property type="term" value="P:peptidoglycan biosynthetic process"/>
    <property type="evidence" value="ECO:0007669"/>
    <property type="project" value="UniProtKB-UniRule"/>
</dbReference>
<dbReference type="GO" id="GO:0008360">
    <property type="term" value="P:regulation of cell shape"/>
    <property type="evidence" value="ECO:0007669"/>
    <property type="project" value="UniProtKB-KW"/>
</dbReference>
<dbReference type="Gene3D" id="3.40.50.10610">
    <property type="entry name" value="ABC-type transport auxiliary lipoprotein component"/>
    <property type="match status" value="1"/>
</dbReference>
<dbReference type="HAMAP" id="MF_01889">
    <property type="entry name" value="LpoB"/>
    <property type="match status" value="1"/>
</dbReference>
<dbReference type="InterPro" id="IPR014094">
    <property type="entry name" value="LpoB"/>
</dbReference>
<dbReference type="InterPro" id="IPR012640">
    <property type="entry name" value="Membr_lipoprot_lipid_attach_CS"/>
</dbReference>
<dbReference type="NCBIfam" id="TIGR02722">
    <property type="entry name" value="lp"/>
    <property type="match status" value="1"/>
</dbReference>
<dbReference type="PANTHER" id="PTHR40593">
    <property type="entry name" value="PENICILLIN-BINDING PROTEIN ACTIVATOR LPOB"/>
    <property type="match status" value="1"/>
</dbReference>
<dbReference type="PANTHER" id="PTHR40593:SF1">
    <property type="entry name" value="PENICILLIN-BINDING PROTEIN ACTIVATOR LPOB"/>
    <property type="match status" value="1"/>
</dbReference>
<dbReference type="Pfam" id="PF08139">
    <property type="entry name" value="LPAM_1"/>
    <property type="match status" value="1"/>
</dbReference>
<dbReference type="Pfam" id="PF13036">
    <property type="entry name" value="LpoB"/>
    <property type="match status" value="1"/>
</dbReference>
<dbReference type="PROSITE" id="PS51257">
    <property type="entry name" value="PROKAR_LIPOPROTEIN"/>
    <property type="match status" value="1"/>
</dbReference>
<protein>
    <recommendedName>
        <fullName evidence="1">Penicillin-binding protein activator LpoB</fullName>
        <shortName evidence="1">PBP activator LpoB</shortName>
    </recommendedName>
</protein>
<accession>A1JME2</accession>
<sequence>MKRYLSVALAALVLTGCITQPPVEPTTPPVTIEPVTPPVPETPPPVDNVPPPPKMEQSIDWAASVEPLVAQMVNSNDVANGSILLLDSVKNNTNGRLPTAKATSALHQVLSSNKKFVLISPQQLAVAKQTLGLSEEDSLGSRSKAIGLARYVSAQYVLYSDVSGDVKSPTIEMQLMQAQTGEIIWSGNGPVKR</sequence>
<feature type="signal peptide" evidence="1">
    <location>
        <begin position="1"/>
        <end position="16"/>
    </location>
</feature>
<feature type="chain" id="PRO_0000405794" description="Penicillin-binding protein activator LpoB">
    <location>
        <begin position="17"/>
        <end position="193"/>
    </location>
</feature>
<feature type="region of interest" description="Disordered" evidence="2">
    <location>
        <begin position="24"/>
        <end position="55"/>
    </location>
</feature>
<feature type="compositionally biased region" description="Pro residues" evidence="2">
    <location>
        <begin position="35"/>
        <end position="54"/>
    </location>
</feature>
<feature type="lipid moiety-binding region" description="N-palmitoyl cysteine" evidence="1">
    <location>
        <position position="17"/>
    </location>
</feature>
<feature type="lipid moiety-binding region" description="S-diacylglycerol cysteine" evidence="1">
    <location>
        <position position="17"/>
    </location>
</feature>
<reference key="1">
    <citation type="journal article" date="2006" name="PLoS Genet.">
        <title>The complete genome sequence and comparative genome analysis of the high pathogenicity Yersinia enterocolitica strain 8081.</title>
        <authorList>
            <person name="Thomson N.R."/>
            <person name="Howard S."/>
            <person name="Wren B.W."/>
            <person name="Holden M.T.G."/>
            <person name="Crossman L."/>
            <person name="Challis G.L."/>
            <person name="Churcher C."/>
            <person name="Mungall K."/>
            <person name="Brooks K."/>
            <person name="Chillingworth T."/>
            <person name="Feltwell T."/>
            <person name="Abdellah Z."/>
            <person name="Hauser H."/>
            <person name="Jagels K."/>
            <person name="Maddison M."/>
            <person name="Moule S."/>
            <person name="Sanders M."/>
            <person name="Whitehead S."/>
            <person name="Quail M.A."/>
            <person name="Dougan G."/>
            <person name="Parkhill J."/>
            <person name="Prentice M.B."/>
        </authorList>
    </citation>
    <scope>NUCLEOTIDE SEQUENCE [LARGE SCALE GENOMIC DNA]</scope>
    <source>
        <strain>NCTC 13174 / 8081</strain>
    </source>
</reference>
<proteinExistence type="inferred from homology"/>
<evidence type="ECO:0000255" key="1">
    <source>
        <dbReference type="HAMAP-Rule" id="MF_01889"/>
    </source>
</evidence>
<evidence type="ECO:0000256" key="2">
    <source>
        <dbReference type="SAM" id="MobiDB-lite"/>
    </source>
</evidence>
<evidence type="ECO:0000305" key="3"/>
<keyword id="KW-0998">Cell outer membrane</keyword>
<keyword id="KW-0133">Cell shape</keyword>
<keyword id="KW-0449">Lipoprotein</keyword>
<keyword id="KW-0472">Membrane</keyword>
<keyword id="KW-0564">Palmitate</keyword>
<keyword id="KW-0573">Peptidoglycan synthesis</keyword>
<keyword id="KW-0732">Signal</keyword>
<organism>
    <name type="scientific">Yersinia enterocolitica serotype O:8 / biotype 1B (strain NCTC 13174 / 8081)</name>
    <dbReference type="NCBI Taxonomy" id="393305"/>
    <lineage>
        <taxon>Bacteria</taxon>
        <taxon>Pseudomonadati</taxon>
        <taxon>Pseudomonadota</taxon>
        <taxon>Gammaproteobacteria</taxon>
        <taxon>Enterobacterales</taxon>
        <taxon>Yersiniaceae</taxon>
        <taxon>Yersinia</taxon>
    </lineage>
</organism>
<gene>
    <name evidence="1" type="primary">lpoB</name>
    <name type="ordered locus">YE1703</name>
</gene>
<comment type="function">
    <text evidence="1">Regulator of peptidoglycan synthesis that is essential for the function of penicillin-binding protein 1B (PBP1b).</text>
</comment>
<comment type="subunit">
    <text evidence="1">Interacts with PBP1b.</text>
</comment>
<comment type="subcellular location">
    <subcellularLocation>
        <location evidence="1">Cell outer membrane</location>
        <topology evidence="1">Lipid-anchor</topology>
        <orientation evidence="1">Periplasmic side</orientation>
    </subcellularLocation>
</comment>
<comment type="similarity">
    <text evidence="1">Belongs to the LpoB family.</text>
</comment>
<comment type="sequence caution" evidence="3">
    <conflict type="erroneous initiation">
        <sequence resource="EMBL-CDS" id="CAL11778"/>
    </conflict>
    <text>Truncated N-terminus.</text>
</comment>